<dbReference type="EC" id="2.7.7.6" evidence="1"/>
<dbReference type="EMBL" id="BX640437">
    <property type="protein sequence ID" value="CAE30516.1"/>
    <property type="status" value="ALT_INIT"/>
    <property type="molecule type" value="Genomic_DNA"/>
</dbReference>
<dbReference type="RefSeq" id="WP_033447220.1">
    <property type="nucleotide sequence ID" value="NC_002927.3"/>
</dbReference>
<dbReference type="SMR" id="Q7WRD9"/>
<dbReference type="GeneID" id="56481303"/>
<dbReference type="KEGG" id="bbr:BB0014"/>
<dbReference type="eggNOG" id="COG0085">
    <property type="taxonomic scope" value="Bacteria"/>
</dbReference>
<dbReference type="HOGENOM" id="CLU_000524_4_3_4"/>
<dbReference type="Proteomes" id="UP000001027">
    <property type="component" value="Chromosome"/>
</dbReference>
<dbReference type="GO" id="GO:0000428">
    <property type="term" value="C:DNA-directed RNA polymerase complex"/>
    <property type="evidence" value="ECO:0007669"/>
    <property type="project" value="UniProtKB-KW"/>
</dbReference>
<dbReference type="GO" id="GO:0003677">
    <property type="term" value="F:DNA binding"/>
    <property type="evidence" value="ECO:0007669"/>
    <property type="project" value="UniProtKB-UniRule"/>
</dbReference>
<dbReference type="GO" id="GO:0003899">
    <property type="term" value="F:DNA-directed RNA polymerase activity"/>
    <property type="evidence" value="ECO:0007669"/>
    <property type="project" value="UniProtKB-UniRule"/>
</dbReference>
<dbReference type="GO" id="GO:0032549">
    <property type="term" value="F:ribonucleoside binding"/>
    <property type="evidence" value="ECO:0007669"/>
    <property type="project" value="InterPro"/>
</dbReference>
<dbReference type="GO" id="GO:0006351">
    <property type="term" value="P:DNA-templated transcription"/>
    <property type="evidence" value="ECO:0007669"/>
    <property type="project" value="UniProtKB-UniRule"/>
</dbReference>
<dbReference type="CDD" id="cd00653">
    <property type="entry name" value="RNA_pol_B_RPB2"/>
    <property type="match status" value="1"/>
</dbReference>
<dbReference type="FunFam" id="2.40.50.100:FF:000006">
    <property type="entry name" value="DNA-directed RNA polymerase subunit beta"/>
    <property type="match status" value="1"/>
</dbReference>
<dbReference type="FunFam" id="3.90.1800.10:FF:000001">
    <property type="entry name" value="DNA-directed RNA polymerase subunit beta"/>
    <property type="match status" value="1"/>
</dbReference>
<dbReference type="Gene3D" id="2.40.50.100">
    <property type="match status" value="1"/>
</dbReference>
<dbReference type="Gene3D" id="2.40.50.150">
    <property type="match status" value="1"/>
</dbReference>
<dbReference type="Gene3D" id="3.90.1100.10">
    <property type="match status" value="2"/>
</dbReference>
<dbReference type="Gene3D" id="6.10.140.1670">
    <property type="match status" value="1"/>
</dbReference>
<dbReference type="Gene3D" id="2.30.150.10">
    <property type="entry name" value="DNA-directed RNA polymerase, beta subunit, external 1 domain"/>
    <property type="match status" value="1"/>
</dbReference>
<dbReference type="Gene3D" id="2.40.270.10">
    <property type="entry name" value="DNA-directed RNA polymerase, subunit 2, domain 6"/>
    <property type="match status" value="1"/>
</dbReference>
<dbReference type="Gene3D" id="3.90.1800.10">
    <property type="entry name" value="RNA polymerase alpha subunit dimerisation domain"/>
    <property type="match status" value="1"/>
</dbReference>
<dbReference type="Gene3D" id="3.90.1110.10">
    <property type="entry name" value="RNA polymerase Rpb2, domain 2"/>
    <property type="match status" value="1"/>
</dbReference>
<dbReference type="HAMAP" id="MF_01321">
    <property type="entry name" value="RNApol_bact_RpoB"/>
    <property type="match status" value="1"/>
</dbReference>
<dbReference type="InterPro" id="IPR042107">
    <property type="entry name" value="DNA-dir_RNA_pol_bsu_ext_1_sf"/>
</dbReference>
<dbReference type="InterPro" id="IPR019462">
    <property type="entry name" value="DNA-dir_RNA_pol_bsu_external_1"/>
</dbReference>
<dbReference type="InterPro" id="IPR015712">
    <property type="entry name" value="DNA-dir_RNA_pol_su2"/>
</dbReference>
<dbReference type="InterPro" id="IPR007120">
    <property type="entry name" value="DNA-dir_RNAP_su2_dom"/>
</dbReference>
<dbReference type="InterPro" id="IPR037033">
    <property type="entry name" value="DNA-dir_RNAP_su2_hyb_sf"/>
</dbReference>
<dbReference type="InterPro" id="IPR010243">
    <property type="entry name" value="RNA_pol_bsu_bac"/>
</dbReference>
<dbReference type="InterPro" id="IPR007121">
    <property type="entry name" value="RNA_pol_bsu_CS"/>
</dbReference>
<dbReference type="InterPro" id="IPR007644">
    <property type="entry name" value="RNA_pol_bsu_protrusion"/>
</dbReference>
<dbReference type="InterPro" id="IPR007642">
    <property type="entry name" value="RNA_pol_Rpb2_2"/>
</dbReference>
<dbReference type="InterPro" id="IPR037034">
    <property type="entry name" value="RNA_pol_Rpb2_2_sf"/>
</dbReference>
<dbReference type="InterPro" id="IPR007645">
    <property type="entry name" value="RNA_pol_Rpb2_3"/>
</dbReference>
<dbReference type="InterPro" id="IPR007641">
    <property type="entry name" value="RNA_pol_Rpb2_7"/>
</dbReference>
<dbReference type="InterPro" id="IPR014724">
    <property type="entry name" value="RNA_pol_RPB2_OB-fold"/>
</dbReference>
<dbReference type="NCBIfam" id="NF001616">
    <property type="entry name" value="PRK00405.1"/>
    <property type="match status" value="1"/>
</dbReference>
<dbReference type="NCBIfam" id="TIGR02013">
    <property type="entry name" value="rpoB"/>
    <property type="match status" value="1"/>
</dbReference>
<dbReference type="PANTHER" id="PTHR20856">
    <property type="entry name" value="DNA-DIRECTED RNA POLYMERASE I SUBUNIT 2"/>
    <property type="match status" value="1"/>
</dbReference>
<dbReference type="Pfam" id="PF04563">
    <property type="entry name" value="RNA_pol_Rpb2_1"/>
    <property type="match status" value="1"/>
</dbReference>
<dbReference type="Pfam" id="PF04561">
    <property type="entry name" value="RNA_pol_Rpb2_2"/>
    <property type="match status" value="2"/>
</dbReference>
<dbReference type="Pfam" id="PF04565">
    <property type="entry name" value="RNA_pol_Rpb2_3"/>
    <property type="match status" value="1"/>
</dbReference>
<dbReference type="Pfam" id="PF10385">
    <property type="entry name" value="RNA_pol_Rpb2_45"/>
    <property type="match status" value="1"/>
</dbReference>
<dbReference type="Pfam" id="PF00562">
    <property type="entry name" value="RNA_pol_Rpb2_6"/>
    <property type="match status" value="1"/>
</dbReference>
<dbReference type="Pfam" id="PF04560">
    <property type="entry name" value="RNA_pol_Rpb2_7"/>
    <property type="match status" value="1"/>
</dbReference>
<dbReference type="SUPFAM" id="SSF64484">
    <property type="entry name" value="beta and beta-prime subunits of DNA dependent RNA-polymerase"/>
    <property type="match status" value="1"/>
</dbReference>
<dbReference type="PROSITE" id="PS01166">
    <property type="entry name" value="RNA_POL_BETA"/>
    <property type="match status" value="1"/>
</dbReference>
<sequence length="1370" mass="153123">MPYSYTEKKRIRKSFAKREDVQNVPFLLATQLQSYLTFLQADTATSDRVNEGLQAAFSSIFPIVSHNGMARLEFVSYALGEPVFDVKECQQRGLTYASPLRAKVRLVLLDREVSKPTIKEVKEQEVYMGEIPLMTGTGSFVINGTERVIVSQLHRSPGVFFEHDRGKTHSSGKLLFSARVIPYRGSWLDFEFDPKDVLFFRVDRRRKMPVTILLKAIGMTPESILAHFFDFDNFELKSEGGMMEFVAERWKGEMARFDIADRDGKVIVEKDKRINAKHLRDLAAGGIQRVSVPEDFLYGRVLAKNIVDPDTGEVVAHANDEITESVLNAMRAANVRDIQTLYTNDLDRGPYISQTLRADETADQMAARVAIYRMMRPGEPPTEEAVEALFQRLFYSEETYDLSRVGRMKVNSRLGRGDDSTGPMTLTNEDILETIKVLVELRNGRGQIDDIDHLGNRRVRCVGELAENQFRAGLVRVERAVKERLGQAETENLMPHDLINSKPISAAIKEFFGSSQLSQFMDQTNPLSEITHKRRVSALGPGGLTRERAGFEVRDVHPTHYGRVCPIETPEGPNIGLINSMALYARLNEYGFLETPYRKIIDGKVSDQIDYLSAIEESHYVIAQANAALDDEGRFVDDLVACREAGETMLTAPGNVHYMDVAPSQIVSVAASLIPFLEHDDANRALMGANMQRQAVPCLRPEKPLVGTGVERTVAVDSGTTVQALRGGVVDHVDADRVVIRVNDEENVAGEVGVDIYNLIKYTRSNQNTNINQRPIVARGDKVAKGDVLADGASTDLGELALGQNMLIAFMPWNGYNFEDSILISERVVADDRYTSIHIEELTVVARDTKLGPEEITRDISNLAETQLNRLDDSGIVYIGAEVSADDVLVGKVTPKGETQLTPEEKLLRAIFGEKASDVKDTSLRVPSGMTGTVIDVQVFTREGIVRDKRAQSIIDDELRRYRQDLNDQLRIVENDQFDRIEKMLVGKAVNGGPRKLAKGATLTKAYLADLDRWQWFDIRLADEQHAVVLEQAKESLEQKRHQFDLAFEEKRKKLTQGDELPPGVLKMIKVYLAVKRRLQPGDKMAGRHGNKGVVSRITPVEDMPHMADGTPADIVLNPLGVPSRMNVGQVLEVHLGWAAKGVGYRIADMLRDERTAQAKSVRGYLEKVYNTTGSSAHIDSLTDEEVLELANNLKKGVPFATPVFDGATEEEIGKMLELAYPDDVAARMRLTASRSQAWLYDGRTGEQFERPVTIGYMHYLKLHHLVDDKMHARSTGPYSLVTQQPLGGKAQFGGQRFGEMEVWALEAYGASYTLQEMLTVKSDDITGRTKVYENIVKGDHVIDAGMPESFNVLVKEIRSLALDMDLERN</sequence>
<evidence type="ECO:0000255" key="1">
    <source>
        <dbReference type="HAMAP-Rule" id="MF_01321"/>
    </source>
</evidence>
<evidence type="ECO:0000305" key="2"/>
<keyword id="KW-0240">DNA-directed RNA polymerase</keyword>
<keyword id="KW-0548">Nucleotidyltransferase</keyword>
<keyword id="KW-0804">Transcription</keyword>
<keyword id="KW-0808">Transferase</keyword>
<organism>
    <name type="scientific">Bordetella bronchiseptica (strain ATCC BAA-588 / NCTC 13252 / RB50)</name>
    <name type="common">Alcaligenes bronchisepticus</name>
    <dbReference type="NCBI Taxonomy" id="257310"/>
    <lineage>
        <taxon>Bacteria</taxon>
        <taxon>Pseudomonadati</taxon>
        <taxon>Pseudomonadota</taxon>
        <taxon>Betaproteobacteria</taxon>
        <taxon>Burkholderiales</taxon>
        <taxon>Alcaligenaceae</taxon>
        <taxon>Bordetella</taxon>
    </lineage>
</organism>
<name>RPOB_BORBR</name>
<reference key="1">
    <citation type="journal article" date="2003" name="Nat. Genet.">
        <title>Comparative analysis of the genome sequences of Bordetella pertussis, Bordetella parapertussis and Bordetella bronchiseptica.</title>
        <authorList>
            <person name="Parkhill J."/>
            <person name="Sebaihia M."/>
            <person name="Preston A."/>
            <person name="Murphy L.D."/>
            <person name="Thomson N.R."/>
            <person name="Harris D.E."/>
            <person name="Holden M.T.G."/>
            <person name="Churcher C.M."/>
            <person name="Bentley S.D."/>
            <person name="Mungall K.L."/>
            <person name="Cerdeno-Tarraga A.-M."/>
            <person name="Temple L."/>
            <person name="James K.D."/>
            <person name="Harris B."/>
            <person name="Quail M.A."/>
            <person name="Achtman M."/>
            <person name="Atkin R."/>
            <person name="Baker S."/>
            <person name="Basham D."/>
            <person name="Bason N."/>
            <person name="Cherevach I."/>
            <person name="Chillingworth T."/>
            <person name="Collins M."/>
            <person name="Cronin A."/>
            <person name="Davis P."/>
            <person name="Doggett J."/>
            <person name="Feltwell T."/>
            <person name="Goble A."/>
            <person name="Hamlin N."/>
            <person name="Hauser H."/>
            <person name="Holroyd S."/>
            <person name="Jagels K."/>
            <person name="Leather S."/>
            <person name="Moule S."/>
            <person name="Norberczak H."/>
            <person name="O'Neil S."/>
            <person name="Ormond D."/>
            <person name="Price C."/>
            <person name="Rabbinowitsch E."/>
            <person name="Rutter S."/>
            <person name="Sanders M."/>
            <person name="Saunders D."/>
            <person name="Seeger K."/>
            <person name="Sharp S."/>
            <person name="Simmonds M."/>
            <person name="Skelton J."/>
            <person name="Squares R."/>
            <person name="Squares S."/>
            <person name="Stevens K."/>
            <person name="Unwin L."/>
            <person name="Whitehead S."/>
            <person name="Barrell B.G."/>
            <person name="Maskell D.J."/>
        </authorList>
    </citation>
    <scope>NUCLEOTIDE SEQUENCE [LARGE SCALE GENOMIC DNA]</scope>
    <source>
        <strain>ATCC BAA-588 / NCTC 13252 / RB50</strain>
    </source>
</reference>
<feature type="chain" id="PRO_0000047865" description="DNA-directed RNA polymerase subunit beta">
    <location>
        <begin position="1"/>
        <end position="1370"/>
    </location>
</feature>
<accession>Q7WRD9</accession>
<protein>
    <recommendedName>
        <fullName evidence="1">DNA-directed RNA polymerase subunit beta</fullName>
        <shortName evidence="1">RNAP subunit beta</shortName>
        <ecNumber evidence="1">2.7.7.6</ecNumber>
    </recommendedName>
    <alternativeName>
        <fullName evidence="1">RNA polymerase subunit beta</fullName>
    </alternativeName>
    <alternativeName>
        <fullName evidence="1">Transcriptase subunit beta</fullName>
    </alternativeName>
</protein>
<comment type="function">
    <text evidence="1">DNA-dependent RNA polymerase catalyzes the transcription of DNA into RNA using the four ribonucleoside triphosphates as substrates.</text>
</comment>
<comment type="catalytic activity">
    <reaction evidence="1">
        <text>RNA(n) + a ribonucleoside 5'-triphosphate = RNA(n+1) + diphosphate</text>
        <dbReference type="Rhea" id="RHEA:21248"/>
        <dbReference type="Rhea" id="RHEA-COMP:14527"/>
        <dbReference type="Rhea" id="RHEA-COMP:17342"/>
        <dbReference type="ChEBI" id="CHEBI:33019"/>
        <dbReference type="ChEBI" id="CHEBI:61557"/>
        <dbReference type="ChEBI" id="CHEBI:140395"/>
        <dbReference type="EC" id="2.7.7.6"/>
    </reaction>
</comment>
<comment type="subunit">
    <text evidence="1">The RNAP catalytic core consists of 2 alpha, 1 beta, 1 beta' and 1 omega subunit. When a sigma factor is associated with the core the holoenzyme is formed, which can initiate transcription.</text>
</comment>
<comment type="similarity">
    <text evidence="1">Belongs to the RNA polymerase beta chain family.</text>
</comment>
<comment type="sequence caution" evidence="2">
    <conflict type="erroneous initiation">
        <sequence resource="EMBL-CDS" id="CAE30516"/>
    </conflict>
</comment>
<proteinExistence type="inferred from homology"/>
<gene>
    <name evidence="1" type="primary">rpoB</name>
    <name type="ordered locus">BB0014</name>
</gene>